<name>TRUA_BURM9</name>
<evidence type="ECO:0000255" key="1">
    <source>
        <dbReference type="HAMAP-Rule" id="MF_00171"/>
    </source>
</evidence>
<organism>
    <name type="scientific">Burkholderia mallei (strain NCTC 10229)</name>
    <dbReference type="NCBI Taxonomy" id="412022"/>
    <lineage>
        <taxon>Bacteria</taxon>
        <taxon>Pseudomonadati</taxon>
        <taxon>Pseudomonadota</taxon>
        <taxon>Betaproteobacteria</taxon>
        <taxon>Burkholderiales</taxon>
        <taxon>Burkholderiaceae</taxon>
        <taxon>Burkholderia</taxon>
        <taxon>pseudomallei group</taxon>
    </lineage>
</organism>
<comment type="function">
    <text evidence="1">Formation of pseudouridine at positions 38, 39 and 40 in the anticodon stem and loop of transfer RNAs.</text>
</comment>
<comment type="catalytic activity">
    <reaction evidence="1">
        <text>uridine(38/39/40) in tRNA = pseudouridine(38/39/40) in tRNA</text>
        <dbReference type="Rhea" id="RHEA:22376"/>
        <dbReference type="Rhea" id="RHEA-COMP:10085"/>
        <dbReference type="Rhea" id="RHEA-COMP:10087"/>
        <dbReference type="ChEBI" id="CHEBI:65314"/>
        <dbReference type="ChEBI" id="CHEBI:65315"/>
        <dbReference type="EC" id="5.4.99.12"/>
    </reaction>
</comment>
<comment type="subunit">
    <text evidence="1">Homodimer.</text>
</comment>
<comment type="similarity">
    <text evidence="1">Belongs to the tRNA pseudouridine synthase TruA family.</text>
</comment>
<sequence>MMRIALGIQYDGAAFCGWQSQPHGKTVQDALERSLAEFAQTSLHTTVAGRTDTGVHGLGQVVHFDTDLDRADFSWVRGTNAFLPPTVAVQWAKPMPDTFHARFAAFERTYYYALYVHPVRSPMLAGRAGWVHTPLDVDAMREAAAHLVGEHDFSAFRSSECQAKSPVKHLYQIGIRPDGDFIHFRFRANAFLHHMVRNLMGCLVAVGRGRYPSSWLAEVLESRDRDCAAPTFMPEGLYLAHVGYPAEFAVPPAQLGSVPWSSVWADLDGRT</sequence>
<accession>A2S134</accession>
<accession>A2S133</accession>
<proteinExistence type="inferred from homology"/>
<keyword id="KW-0413">Isomerase</keyword>
<keyword id="KW-0819">tRNA processing</keyword>
<dbReference type="EC" id="5.4.99.12" evidence="1"/>
<dbReference type="EMBL" id="CP000545">
    <property type="protein sequence ID" value="ABM98766.2"/>
    <property type="molecule type" value="Genomic_DNA"/>
</dbReference>
<dbReference type="SMR" id="A2S134"/>
<dbReference type="KEGG" id="bml:BMA10229_1855"/>
<dbReference type="HOGENOM" id="CLU_014673_0_2_4"/>
<dbReference type="Proteomes" id="UP000002283">
    <property type="component" value="Chromosome II"/>
</dbReference>
<dbReference type="GO" id="GO:0003723">
    <property type="term" value="F:RNA binding"/>
    <property type="evidence" value="ECO:0007669"/>
    <property type="project" value="InterPro"/>
</dbReference>
<dbReference type="GO" id="GO:0160147">
    <property type="term" value="F:tRNA pseudouridine(38-40) synthase activity"/>
    <property type="evidence" value="ECO:0007669"/>
    <property type="project" value="UniProtKB-EC"/>
</dbReference>
<dbReference type="GO" id="GO:0031119">
    <property type="term" value="P:tRNA pseudouridine synthesis"/>
    <property type="evidence" value="ECO:0007669"/>
    <property type="project" value="UniProtKB-UniRule"/>
</dbReference>
<dbReference type="CDD" id="cd02570">
    <property type="entry name" value="PseudoU_synth_EcTruA"/>
    <property type="match status" value="1"/>
</dbReference>
<dbReference type="FunFam" id="3.30.70.580:FF:000001">
    <property type="entry name" value="tRNA pseudouridine synthase A"/>
    <property type="match status" value="1"/>
</dbReference>
<dbReference type="Gene3D" id="3.30.70.660">
    <property type="entry name" value="Pseudouridine synthase I, catalytic domain, C-terminal subdomain"/>
    <property type="match status" value="1"/>
</dbReference>
<dbReference type="Gene3D" id="3.30.70.580">
    <property type="entry name" value="Pseudouridine synthase I, catalytic domain, N-terminal subdomain"/>
    <property type="match status" value="1"/>
</dbReference>
<dbReference type="HAMAP" id="MF_00171">
    <property type="entry name" value="TruA"/>
    <property type="match status" value="1"/>
</dbReference>
<dbReference type="InterPro" id="IPR020103">
    <property type="entry name" value="PsdUridine_synth_cat_dom_sf"/>
</dbReference>
<dbReference type="InterPro" id="IPR001406">
    <property type="entry name" value="PsdUridine_synth_TruA"/>
</dbReference>
<dbReference type="InterPro" id="IPR020097">
    <property type="entry name" value="PsdUridine_synth_TruA_a/b_dom"/>
</dbReference>
<dbReference type="InterPro" id="IPR020095">
    <property type="entry name" value="PsdUridine_synth_TruA_C"/>
</dbReference>
<dbReference type="InterPro" id="IPR020094">
    <property type="entry name" value="TruA/RsuA/RluB/E/F_N"/>
</dbReference>
<dbReference type="NCBIfam" id="TIGR00071">
    <property type="entry name" value="hisT_truA"/>
    <property type="match status" value="1"/>
</dbReference>
<dbReference type="PANTHER" id="PTHR11142">
    <property type="entry name" value="PSEUDOURIDYLATE SYNTHASE"/>
    <property type="match status" value="1"/>
</dbReference>
<dbReference type="PANTHER" id="PTHR11142:SF0">
    <property type="entry name" value="TRNA PSEUDOURIDINE SYNTHASE-LIKE 1"/>
    <property type="match status" value="1"/>
</dbReference>
<dbReference type="Pfam" id="PF01416">
    <property type="entry name" value="PseudoU_synth_1"/>
    <property type="match status" value="2"/>
</dbReference>
<dbReference type="PIRSF" id="PIRSF001430">
    <property type="entry name" value="tRNA_psdUrid_synth"/>
    <property type="match status" value="1"/>
</dbReference>
<dbReference type="SUPFAM" id="SSF55120">
    <property type="entry name" value="Pseudouridine synthase"/>
    <property type="match status" value="1"/>
</dbReference>
<reference key="1">
    <citation type="journal article" date="2010" name="Genome Biol. Evol.">
        <title>Continuing evolution of Burkholderia mallei through genome reduction and large-scale rearrangements.</title>
        <authorList>
            <person name="Losada L."/>
            <person name="Ronning C.M."/>
            <person name="DeShazer D."/>
            <person name="Woods D."/>
            <person name="Fedorova N."/>
            <person name="Kim H.S."/>
            <person name="Shabalina S.A."/>
            <person name="Pearson T.R."/>
            <person name="Brinkac L."/>
            <person name="Tan P."/>
            <person name="Nandi T."/>
            <person name="Crabtree J."/>
            <person name="Badger J."/>
            <person name="Beckstrom-Sternberg S."/>
            <person name="Saqib M."/>
            <person name="Schutzer S.E."/>
            <person name="Keim P."/>
            <person name="Nierman W.C."/>
        </authorList>
    </citation>
    <scope>NUCLEOTIDE SEQUENCE [LARGE SCALE GENOMIC DNA]</scope>
    <source>
        <strain>NCTC 10229</strain>
    </source>
</reference>
<reference key="2">
    <citation type="submission" date="2009-10" db="EMBL/GenBank/DDBJ databases">
        <authorList>
            <person name="Brinkac L.M."/>
            <person name="Harkins D.M."/>
            <person name="Shrivastava S."/>
            <person name="Durkin A.S."/>
            <person name="Sutton G."/>
        </authorList>
    </citation>
    <scope>SEQUENCE REVISION</scope>
</reference>
<feature type="chain" id="PRO_1000017054" description="tRNA pseudouridine synthase A">
    <location>
        <begin position="1"/>
        <end position="271"/>
    </location>
</feature>
<feature type="active site" description="Nucleophile" evidence="1">
    <location>
        <position position="52"/>
    </location>
</feature>
<feature type="binding site" evidence="1">
    <location>
        <position position="110"/>
    </location>
    <ligand>
        <name>substrate</name>
    </ligand>
</feature>
<gene>
    <name evidence="1" type="primary">truA</name>
    <name type="ordered locus">BMA10229_1855</name>
</gene>
<protein>
    <recommendedName>
        <fullName evidence="1">tRNA pseudouridine synthase A</fullName>
        <ecNumber evidence="1">5.4.99.12</ecNumber>
    </recommendedName>
    <alternativeName>
        <fullName evidence="1">tRNA pseudouridine(38-40) synthase</fullName>
    </alternativeName>
    <alternativeName>
        <fullName evidence="1">tRNA pseudouridylate synthase I</fullName>
    </alternativeName>
    <alternativeName>
        <fullName evidence="1">tRNA-uridine isomerase I</fullName>
    </alternativeName>
</protein>